<reference evidence="3" key="1">
    <citation type="journal article" date="1999" name="Nature">
        <title>Sequence and analysis of chromosome 2 of the plant Arabidopsis thaliana.</title>
        <authorList>
            <person name="Lin X."/>
            <person name="Kaul S."/>
            <person name="Rounsley S.D."/>
            <person name="Shea T.P."/>
            <person name="Benito M.-I."/>
            <person name="Town C.D."/>
            <person name="Fujii C.Y."/>
            <person name="Mason T.M."/>
            <person name="Bowman C.L."/>
            <person name="Barnstead M.E."/>
            <person name="Feldblyum T.V."/>
            <person name="Buell C.R."/>
            <person name="Ketchum K.A."/>
            <person name="Lee J.J."/>
            <person name="Ronning C.M."/>
            <person name="Koo H.L."/>
            <person name="Moffat K.S."/>
            <person name="Cronin L.A."/>
            <person name="Shen M."/>
            <person name="Pai G."/>
            <person name="Van Aken S."/>
            <person name="Umayam L."/>
            <person name="Tallon L.J."/>
            <person name="Gill J.E."/>
            <person name="Adams M.D."/>
            <person name="Carrera A.J."/>
            <person name="Creasy T.H."/>
            <person name="Goodman H.M."/>
            <person name="Somerville C.R."/>
            <person name="Copenhaver G.P."/>
            <person name="Preuss D."/>
            <person name="Nierman W.C."/>
            <person name="White O."/>
            <person name="Eisen J.A."/>
            <person name="Salzberg S.L."/>
            <person name="Fraser C.M."/>
            <person name="Venter J.C."/>
        </authorList>
    </citation>
    <scope>NUCLEOTIDE SEQUENCE [LARGE SCALE GENOMIC DNA]</scope>
    <source>
        <strain>cv. Columbia</strain>
    </source>
</reference>
<reference key="2">
    <citation type="journal article" date="2017" name="Plant J.">
        <title>Araport11: a complete reannotation of the Arabidopsis thaliana reference genome.</title>
        <authorList>
            <person name="Cheng C.Y."/>
            <person name="Krishnakumar V."/>
            <person name="Chan A.P."/>
            <person name="Thibaud-Nissen F."/>
            <person name="Schobel S."/>
            <person name="Town C.D."/>
        </authorList>
    </citation>
    <scope>GENOME REANNOTATION</scope>
    <source>
        <strain>cv. Columbia</strain>
    </source>
</reference>
<reference evidence="3" key="3">
    <citation type="journal article" date="2001" name="Plant Mol. Biol.">
        <title>Two large Arabidopsis thaliana gene families are homologous to the Brassica gene superfamily that encodes pollen coat proteins and the male component of the self-incompatibility response.</title>
        <authorList>
            <person name="Vanoosthuyse V."/>
            <person name="Miege C."/>
            <person name="Dumas C."/>
            <person name="Cock J.M."/>
        </authorList>
    </citation>
    <scope>IDENTIFICATION</scope>
</reference>
<reference key="4">
    <citation type="journal article" date="2005" name="Plant Physiol.">
        <title>Genome organization of more than 300 defensin-like genes in Arabidopsis.</title>
        <authorList>
            <person name="Silverstein K.A.T."/>
            <person name="Graham M.A."/>
            <person name="Paape T.D."/>
            <person name="VandenBosch K.A."/>
        </authorList>
    </citation>
    <scope>GENE FAMILY</scope>
</reference>
<keyword id="KW-0929">Antimicrobial</keyword>
<keyword id="KW-1015">Disulfide bond</keyword>
<keyword id="KW-0295">Fungicide</keyword>
<keyword id="KW-0611">Plant defense</keyword>
<keyword id="KW-1185">Reference proteome</keyword>
<keyword id="KW-0964">Secreted</keyword>
<keyword id="KW-0732">Signal</keyword>
<feature type="signal peptide" evidence="2">
    <location>
        <begin position="1"/>
        <end position="24"/>
    </location>
</feature>
<feature type="chain" id="PRO_0000017289" description="Putative defensin-like protein 111">
    <location>
        <begin position="25"/>
        <end position="83"/>
    </location>
</feature>
<feature type="disulfide bond" evidence="1">
    <location>
        <begin position="40"/>
        <end position="80"/>
    </location>
</feature>
<feature type="disulfide bond" evidence="1">
    <location>
        <begin position="46"/>
        <end position="69"/>
    </location>
</feature>
<feature type="disulfide bond" evidence="1">
    <location>
        <begin position="54"/>
        <end position="78"/>
    </location>
</feature>
<feature type="disulfide bond" evidence="1">
    <location>
        <begin position="58"/>
        <end position="79"/>
    </location>
</feature>
<proteinExistence type="inferred from homology"/>
<evidence type="ECO:0000250" key="1"/>
<evidence type="ECO:0000255" key="2"/>
<evidence type="ECO:0000305" key="3"/>
<accession>P82765</accession>
<dbReference type="EMBL" id="AC007268">
    <property type="status" value="NOT_ANNOTATED_CDS"/>
    <property type="molecule type" value="Genomic_DNA"/>
</dbReference>
<dbReference type="EMBL" id="CP002685">
    <property type="protein sequence ID" value="AEC06200.1"/>
    <property type="molecule type" value="Genomic_DNA"/>
</dbReference>
<dbReference type="RefSeq" id="NP_001031349.1">
    <property type="nucleotide sequence ID" value="NM_001036272.2"/>
</dbReference>
<dbReference type="SMR" id="P82765"/>
<dbReference type="PaxDb" id="3702-AT2G12465.1"/>
<dbReference type="ProteomicsDB" id="224229"/>
<dbReference type="EnsemblPlants" id="AT2G12465.1">
    <property type="protein sequence ID" value="AT2G12465.1"/>
    <property type="gene ID" value="AT2G12465"/>
</dbReference>
<dbReference type="GeneID" id="3768693"/>
<dbReference type="Gramene" id="AT2G12465.1">
    <property type="protein sequence ID" value="AT2G12465.1"/>
    <property type="gene ID" value="AT2G12465"/>
</dbReference>
<dbReference type="KEGG" id="ath:AT2G12465"/>
<dbReference type="Araport" id="AT2G12465"/>
<dbReference type="TAIR" id="AT2G12465">
    <property type="gene designation" value="LCR50"/>
</dbReference>
<dbReference type="HOGENOM" id="CLU_183259_1_0_1"/>
<dbReference type="InParanoid" id="P82765"/>
<dbReference type="OMA" id="DECERFC"/>
<dbReference type="PhylomeDB" id="P82765"/>
<dbReference type="PRO" id="PR:P82765"/>
<dbReference type="Proteomes" id="UP000006548">
    <property type="component" value="Chromosome 2"/>
</dbReference>
<dbReference type="ExpressionAtlas" id="P82765">
    <property type="expression patterns" value="baseline"/>
</dbReference>
<dbReference type="GO" id="GO:0005576">
    <property type="term" value="C:extracellular region"/>
    <property type="evidence" value="ECO:0007669"/>
    <property type="project" value="UniProtKB-SubCell"/>
</dbReference>
<dbReference type="GO" id="GO:0050832">
    <property type="term" value="P:defense response to fungus"/>
    <property type="evidence" value="ECO:0007669"/>
    <property type="project" value="UniProtKB-KW"/>
</dbReference>
<dbReference type="GO" id="GO:0031640">
    <property type="term" value="P:killing of cells of another organism"/>
    <property type="evidence" value="ECO:0007669"/>
    <property type="project" value="UniProtKB-KW"/>
</dbReference>
<name>DF111_ARATH</name>
<organism evidence="3">
    <name type="scientific">Arabidopsis thaliana</name>
    <name type="common">Mouse-ear cress</name>
    <dbReference type="NCBI Taxonomy" id="3702"/>
    <lineage>
        <taxon>Eukaryota</taxon>
        <taxon>Viridiplantae</taxon>
        <taxon>Streptophyta</taxon>
        <taxon>Embryophyta</taxon>
        <taxon>Tracheophyta</taxon>
        <taxon>Spermatophyta</taxon>
        <taxon>Magnoliopsida</taxon>
        <taxon>eudicotyledons</taxon>
        <taxon>Gunneridae</taxon>
        <taxon>Pentapetalae</taxon>
        <taxon>rosids</taxon>
        <taxon>malvids</taxon>
        <taxon>Brassicales</taxon>
        <taxon>Brassicaceae</taxon>
        <taxon>Camelineae</taxon>
        <taxon>Arabidopsis</taxon>
    </lineage>
</organism>
<protein>
    <recommendedName>
        <fullName>Putative defensin-like protein 111</fullName>
    </recommendedName>
    <alternativeName>
        <fullName>Putative low-molecular-weight cysteine-rich protein 50</fullName>
        <shortName>Protein LCR50</shortName>
    </alternativeName>
</protein>
<sequence length="83" mass="9190">MAITKKILLPFVLTILFVISSVHCSDDTQGFGIKQEYKQCYTPDPCRKGGNDECERFCVAKSGLLYGKCINDGSKDVCCCLTK</sequence>
<gene>
    <name type="primary">LCR50</name>
    <name type="ordered locus">At2g12465</name>
    <name type="ORF">T27D6</name>
</gene>
<comment type="subcellular location">
    <subcellularLocation>
        <location evidence="1">Secreted</location>
    </subcellularLocation>
</comment>
<comment type="similarity">
    <text evidence="3">Belongs to the DEFL family.</text>
</comment>